<evidence type="ECO:0000255" key="1">
    <source>
        <dbReference type="HAMAP-Rule" id="MF_01039"/>
    </source>
</evidence>
<evidence type="ECO:0000305" key="2"/>
<protein>
    <recommendedName>
        <fullName evidence="1">2,3-bisphosphoglycerate-dependent phosphoglycerate mutase</fullName>
        <shortName evidence="1">BPG-dependent PGAM</shortName>
        <shortName evidence="1">PGAM</shortName>
        <shortName evidence="1">Phosphoglyceromutase</shortName>
        <shortName evidence="1">dPGM</shortName>
        <ecNumber evidence="1">5.4.2.11</ecNumber>
    </recommendedName>
</protein>
<dbReference type="EC" id="5.4.2.11" evidence="1"/>
<dbReference type="EMBL" id="AE008918">
    <property type="protein sequence ID" value="AAL53489.1"/>
    <property type="status" value="ALT_INIT"/>
    <property type="molecule type" value="Genomic_DNA"/>
</dbReference>
<dbReference type="PIR" id="AF3540">
    <property type="entry name" value="AF3540"/>
</dbReference>
<dbReference type="RefSeq" id="WP_004682476.1">
    <property type="nucleotide sequence ID" value="NZ_GG703779.1"/>
</dbReference>
<dbReference type="SMR" id="Q8YDC9"/>
<dbReference type="GeneID" id="29596093"/>
<dbReference type="KEGG" id="bme:BMEII0248"/>
<dbReference type="KEGG" id="bmel:DK63_2993"/>
<dbReference type="PATRIC" id="fig|224914.52.peg.3139"/>
<dbReference type="eggNOG" id="COG0588">
    <property type="taxonomic scope" value="Bacteria"/>
</dbReference>
<dbReference type="PhylomeDB" id="Q8YDC9"/>
<dbReference type="UniPathway" id="UPA00109">
    <property type="reaction ID" value="UER00186"/>
</dbReference>
<dbReference type="Proteomes" id="UP000000419">
    <property type="component" value="Chromosome II"/>
</dbReference>
<dbReference type="GO" id="GO:0004619">
    <property type="term" value="F:phosphoglycerate mutase activity"/>
    <property type="evidence" value="ECO:0007669"/>
    <property type="project" value="UniProtKB-EC"/>
</dbReference>
<dbReference type="GO" id="GO:0006094">
    <property type="term" value="P:gluconeogenesis"/>
    <property type="evidence" value="ECO:0007669"/>
    <property type="project" value="UniProtKB-UniRule"/>
</dbReference>
<dbReference type="GO" id="GO:0006096">
    <property type="term" value="P:glycolytic process"/>
    <property type="evidence" value="ECO:0007669"/>
    <property type="project" value="UniProtKB-UniRule"/>
</dbReference>
<dbReference type="CDD" id="cd07067">
    <property type="entry name" value="HP_PGM_like"/>
    <property type="match status" value="1"/>
</dbReference>
<dbReference type="Gene3D" id="3.40.50.1240">
    <property type="entry name" value="Phosphoglycerate mutase-like"/>
    <property type="match status" value="1"/>
</dbReference>
<dbReference type="HAMAP" id="MF_01039">
    <property type="entry name" value="PGAM_GpmA"/>
    <property type="match status" value="1"/>
</dbReference>
<dbReference type="InterPro" id="IPR013078">
    <property type="entry name" value="His_Pase_superF_clade-1"/>
</dbReference>
<dbReference type="InterPro" id="IPR029033">
    <property type="entry name" value="His_PPase_superfam"/>
</dbReference>
<dbReference type="InterPro" id="IPR001345">
    <property type="entry name" value="PG/BPGM_mutase_AS"/>
</dbReference>
<dbReference type="InterPro" id="IPR005952">
    <property type="entry name" value="Phosphogly_mut1"/>
</dbReference>
<dbReference type="NCBIfam" id="TIGR01258">
    <property type="entry name" value="pgm_1"/>
    <property type="match status" value="1"/>
</dbReference>
<dbReference type="NCBIfam" id="NF002339">
    <property type="entry name" value="PRK01295.1"/>
    <property type="match status" value="1"/>
</dbReference>
<dbReference type="PANTHER" id="PTHR11931">
    <property type="entry name" value="PHOSPHOGLYCERATE MUTASE"/>
    <property type="match status" value="1"/>
</dbReference>
<dbReference type="Pfam" id="PF00300">
    <property type="entry name" value="His_Phos_1"/>
    <property type="match status" value="1"/>
</dbReference>
<dbReference type="PIRSF" id="PIRSF000709">
    <property type="entry name" value="6PFK_2-Ptase"/>
    <property type="match status" value="1"/>
</dbReference>
<dbReference type="SMART" id="SM00855">
    <property type="entry name" value="PGAM"/>
    <property type="match status" value="1"/>
</dbReference>
<dbReference type="SUPFAM" id="SSF53254">
    <property type="entry name" value="Phosphoglycerate mutase-like"/>
    <property type="match status" value="1"/>
</dbReference>
<dbReference type="PROSITE" id="PS00175">
    <property type="entry name" value="PG_MUTASE"/>
    <property type="match status" value="1"/>
</dbReference>
<reference key="1">
    <citation type="journal article" date="2002" name="Proc. Natl. Acad. Sci. U.S.A.">
        <title>The genome sequence of the facultative intracellular pathogen Brucella melitensis.</title>
        <authorList>
            <person name="DelVecchio V.G."/>
            <person name="Kapatral V."/>
            <person name="Redkar R.J."/>
            <person name="Patra G."/>
            <person name="Mujer C."/>
            <person name="Los T."/>
            <person name="Ivanova N."/>
            <person name="Anderson I."/>
            <person name="Bhattacharyya A."/>
            <person name="Lykidis A."/>
            <person name="Reznik G."/>
            <person name="Jablonski L."/>
            <person name="Larsen N."/>
            <person name="D'Souza M."/>
            <person name="Bernal A."/>
            <person name="Mazur M."/>
            <person name="Goltsman E."/>
            <person name="Selkov E."/>
            <person name="Elzer P.H."/>
            <person name="Hagius S."/>
            <person name="O'Callaghan D."/>
            <person name="Letesson J.-J."/>
            <person name="Haselkorn R."/>
            <person name="Kyrpides N.C."/>
            <person name="Overbeek R."/>
        </authorList>
    </citation>
    <scope>NUCLEOTIDE SEQUENCE [LARGE SCALE GENOMIC DNA]</scope>
    <source>
        <strain>ATCC 23456 / CCUG 17765 / NCTC 10094 / 16M</strain>
    </source>
</reference>
<sequence length="206" mass="22900">MSRTLVLVRHGQSEWNLKNLFTGWRDPGLTEQGHAEAKAAGQRLKAAGLKFDIAYTSALSRAQVTCQHILDELGQPGLETIRDQALNERDYGDLSGLNKDDARAKWGEEQVHIWRRSYDVPPPGGESLKDTGARVWPYYLHTIQPHVLREETVLVAAHGNSLRALIMALEGLTPEQILKQELNTGVPIIYRLNADSTVASKEILSA</sequence>
<gene>
    <name evidence="1" type="primary">gpmA</name>
    <name type="ordered locus">BMEII0248</name>
</gene>
<keyword id="KW-0312">Gluconeogenesis</keyword>
<keyword id="KW-0324">Glycolysis</keyword>
<keyword id="KW-0413">Isomerase</keyword>
<comment type="function">
    <text evidence="1">Catalyzes the interconversion of 2-phosphoglycerate and 3-phosphoglycerate.</text>
</comment>
<comment type="catalytic activity">
    <reaction evidence="1">
        <text>(2R)-2-phosphoglycerate = (2R)-3-phosphoglycerate</text>
        <dbReference type="Rhea" id="RHEA:15901"/>
        <dbReference type="ChEBI" id="CHEBI:58272"/>
        <dbReference type="ChEBI" id="CHEBI:58289"/>
        <dbReference type="EC" id="5.4.2.11"/>
    </reaction>
</comment>
<comment type="pathway">
    <text evidence="1">Carbohydrate degradation; glycolysis; pyruvate from D-glyceraldehyde 3-phosphate: step 3/5.</text>
</comment>
<comment type="subunit">
    <text evidence="1">Homodimer.</text>
</comment>
<comment type="similarity">
    <text evidence="1">Belongs to the phosphoglycerate mutase family. BPG-dependent PGAM subfamily.</text>
</comment>
<comment type="sequence caution" evidence="2">
    <conflict type="erroneous initiation">
        <sequence resource="EMBL-CDS" id="AAL53489"/>
    </conflict>
    <text>Extended N-terminus.</text>
</comment>
<accession>Q8YDC9</accession>
<organism>
    <name type="scientific">Brucella melitensis biotype 1 (strain ATCC 23456 / CCUG 17765 / NCTC 10094 / 16M)</name>
    <dbReference type="NCBI Taxonomy" id="224914"/>
    <lineage>
        <taxon>Bacteria</taxon>
        <taxon>Pseudomonadati</taxon>
        <taxon>Pseudomonadota</taxon>
        <taxon>Alphaproteobacteria</taxon>
        <taxon>Hyphomicrobiales</taxon>
        <taxon>Brucellaceae</taxon>
        <taxon>Brucella/Ochrobactrum group</taxon>
        <taxon>Brucella</taxon>
    </lineage>
</organism>
<feature type="chain" id="PRO_0000179856" description="2,3-bisphosphoglycerate-dependent phosphoglycerate mutase">
    <location>
        <begin position="1"/>
        <end position="206"/>
    </location>
</feature>
<feature type="active site" description="Tele-phosphohistidine intermediate" evidence="1">
    <location>
        <position position="10"/>
    </location>
</feature>
<feature type="active site" description="Proton donor/acceptor" evidence="1">
    <location>
        <position position="88"/>
    </location>
</feature>
<feature type="binding site" evidence="1">
    <location>
        <begin position="9"/>
        <end position="16"/>
    </location>
    <ligand>
        <name>substrate</name>
    </ligand>
</feature>
<feature type="binding site" evidence="1">
    <location>
        <begin position="22"/>
        <end position="23"/>
    </location>
    <ligand>
        <name>substrate</name>
    </ligand>
</feature>
<feature type="binding site" evidence="1">
    <location>
        <position position="61"/>
    </location>
    <ligand>
        <name>substrate</name>
    </ligand>
</feature>
<feature type="binding site" evidence="1">
    <location>
        <begin position="88"/>
        <end position="91"/>
    </location>
    <ligand>
        <name>substrate</name>
    </ligand>
</feature>
<feature type="binding site" evidence="1">
    <location>
        <position position="99"/>
    </location>
    <ligand>
        <name>substrate</name>
    </ligand>
</feature>
<feature type="binding site" evidence="1">
    <location>
        <begin position="115"/>
        <end position="116"/>
    </location>
    <ligand>
        <name>substrate</name>
    </ligand>
</feature>
<feature type="binding site" evidence="1">
    <location>
        <begin position="159"/>
        <end position="160"/>
    </location>
    <ligand>
        <name>substrate</name>
    </ligand>
</feature>
<feature type="site" description="Transition state stabilizer" evidence="1">
    <location>
        <position position="158"/>
    </location>
</feature>
<proteinExistence type="inferred from homology"/>
<name>GPMA_BRUME</name>